<dbReference type="EMBL" id="CP000941">
    <property type="protein sequence ID" value="ACA12786.1"/>
    <property type="molecule type" value="Genomic_DNA"/>
</dbReference>
<dbReference type="RefSeq" id="WP_004086418.1">
    <property type="nucleotide sequence ID" value="NC_010513.1"/>
</dbReference>
<dbReference type="SMR" id="B0U4K7"/>
<dbReference type="KEGG" id="xfm:Xfasm12_1910"/>
<dbReference type="HOGENOM" id="CLU_108412_0_0_6"/>
<dbReference type="GO" id="GO:0005524">
    <property type="term" value="F:ATP binding"/>
    <property type="evidence" value="ECO:0007669"/>
    <property type="project" value="UniProtKB-KW"/>
</dbReference>
<dbReference type="GO" id="GO:0003677">
    <property type="term" value="F:DNA binding"/>
    <property type="evidence" value="ECO:0007669"/>
    <property type="project" value="UniProtKB-KW"/>
</dbReference>
<dbReference type="GO" id="GO:0008270">
    <property type="term" value="F:zinc ion binding"/>
    <property type="evidence" value="ECO:0007669"/>
    <property type="project" value="UniProtKB-UniRule"/>
</dbReference>
<dbReference type="GO" id="GO:0045892">
    <property type="term" value="P:negative regulation of DNA-templated transcription"/>
    <property type="evidence" value="ECO:0007669"/>
    <property type="project" value="UniProtKB-UniRule"/>
</dbReference>
<dbReference type="HAMAP" id="MF_00440">
    <property type="entry name" value="NrdR"/>
    <property type="match status" value="1"/>
</dbReference>
<dbReference type="InterPro" id="IPR005144">
    <property type="entry name" value="ATP-cone_dom"/>
</dbReference>
<dbReference type="InterPro" id="IPR055173">
    <property type="entry name" value="NrdR-like_N"/>
</dbReference>
<dbReference type="InterPro" id="IPR003796">
    <property type="entry name" value="RNR_NrdR-like"/>
</dbReference>
<dbReference type="NCBIfam" id="TIGR00244">
    <property type="entry name" value="transcriptional regulator NrdR"/>
    <property type="match status" value="1"/>
</dbReference>
<dbReference type="PANTHER" id="PTHR30455">
    <property type="entry name" value="TRANSCRIPTIONAL REPRESSOR NRDR"/>
    <property type="match status" value="1"/>
</dbReference>
<dbReference type="PANTHER" id="PTHR30455:SF2">
    <property type="entry name" value="TRANSCRIPTIONAL REPRESSOR NRDR"/>
    <property type="match status" value="1"/>
</dbReference>
<dbReference type="Pfam" id="PF03477">
    <property type="entry name" value="ATP-cone"/>
    <property type="match status" value="1"/>
</dbReference>
<dbReference type="Pfam" id="PF22811">
    <property type="entry name" value="Zn_ribbon_NrdR"/>
    <property type="match status" value="1"/>
</dbReference>
<dbReference type="PROSITE" id="PS51161">
    <property type="entry name" value="ATP_CONE"/>
    <property type="match status" value="1"/>
</dbReference>
<gene>
    <name evidence="1" type="primary">nrdR</name>
    <name type="ordered locus">Xfasm12_1910</name>
</gene>
<reference key="1">
    <citation type="journal article" date="2010" name="J. Bacteriol.">
        <title>Whole genome sequences of two Xylella fastidiosa strains (M12 and M23) causing almond leaf scorch disease in California.</title>
        <authorList>
            <person name="Chen J."/>
            <person name="Xie G."/>
            <person name="Han S."/>
            <person name="Chertkov O."/>
            <person name="Sims D."/>
            <person name="Civerolo E.L."/>
        </authorList>
    </citation>
    <scope>NUCLEOTIDE SEQUENCE [LARGE SCALE GENOMIC DNA]</scope>
    <source>
        <strain>M12</strain>
    </source>
</reference>
<evidence type="ECO:0000255" key="1">
    <source>
        <dbReference type="HAMAP-Rule" id="MF_00440"/>
    </source>
</evidence>
<feature type="chain" id="PRO_1000124567" description="Transcriptional repressor NrdR">
    <location>
        <begin position="1"/>
        <end position="181"/>
    </location>
</feature>
<feature type="domain" description="ATP-cone" evidence="1">
    <location>
        <begin position="49"/>
        <end position="139"/>
    </location>
</feature>
<feature type="zinc finger region" evidence="1">
    <location>
        <begin position="3"/>
        <end position="34"/>
    </location>
</feature>
<accession>B0U4K7</accession>
<protein>
    <recommendedName>
        <fullName evidence="1">Transcriptional repressor NrdR</fullName>
    </recommendedName>
</protein>
<proteinExistence type="inferred from homology"/>
<keyword id="KW-0067">ATP-binding</keyword>
<keyword id="KW-0238">DNA-binding</keyword>
<keyword id="KW-0479">Metal-binding</keyword>
<keyword id="KW-0547">Nucleotide-binding</keyword>
<keyword id="KW-0678">Repressor</keyword>
<keyword id="KW-0804">Transcription</keyword>
<keyword id="KW-0805">Transcription regulation</keyword>
<keyword id="KW-0862">Zinc</keyword>
<keyword id="KW-0863">Zinc-finger</keyword>
<sequence length="181" mass="20698">MYCLFCQHTDTRVIDSRVSEDGATIRRRRECEACGERFSTLETIELKLPVIIKKDGGREAFDGRKLRTSFDRALQKRPVAEERIEMAMRAVIHRLRMAGEREVPSIVVGECVMAELRKLDHVGYVRFASVYRSFQDVADFREEIEKLESELLVSREQLPLLEAAMESMGHPSIDQGGKHGA</sequence>
<name>NRDR_XYLFM</name>
<organism>
    <name type="scientific">Xylella fastidiosa (strain M12)</name>
    <dbReference type="NCBI Taxonomy" id="405440"/>
    <lineage>
        <taxon>Bacteria</taxon>
        <taxon>Pseudomonadati</taxon>
        <taxon>Pseudomonadota</taxon>
        <taxon>Gammaproteobacteria</taxon>
        <taxon>Lysobacterales</taxon>
        <taxon>Lysobacteraceae</taxon>
        <taxon>Xylella</taxon>
    </lineage>
</organism>
<comment type="function">
    <text evidence="1">Negatively regulates transcription of bacterial ribonucleotide reductase nrd genes and operons by binding to NrdR-boxes.</text>
</comment>
<comment type="cofactor">
    <cofactor evidence="1">
        <name>Zn(2+)</name>
        <dbReference type="ChEBI" id="CHEBI:29105"/>
    </cofactor>
    <text evidence="1">Binds 1 zinc ion.</text>
</comment>
<comment type="similarity">
    <text evidence="1">Belongs to the NrdR family.</text>
</comment>